<organism>
    <name type="scientific">Homo sapiens</name>
    <name type="common">Human</name>
    <dbReference type="NCBI Taxonomy" id="9606"/>
    <lineage>
        <taxon>Eukaryota</taxon>
        <taxon>Metazoa</taxon>
        <taxon>Chordata</taxon>
        <taxon>Craniata</taxon>
        <taxon>Vertebrata</taxon>
        <taxon>Euteleostomi</taxon>
        <taxon>Mammalia</taxon>
        <taxon>Eutheria</taxon>
        <taxon>Euarchontoglires</taxon>
        <taxon>Primates</taxon>
        <taxon>Haplorrhini</taxon>
        <taxon>Catarrhini</taxon>
        <taxon>Hominidae</taxon>
        <taxon>Homo</taxon>
    </lineage>
</organism>
<keyword id="KW-0002">3D-structure</keyword>
<keyword id="KW-0496">Mitochondrion</keyword>
<keyword id="KW-1267">Proteomics identification</keyword>
<keyword id="KW-1185">Reference proteome</keyword>
<keyword id="KW-0687">Ribonucleoprotein</keyword>
<keyword id="KW-0689">Ribosomal protein</keyword>
<keyword id="KW-0809">Transit peptide</keyword>
<accession>Q9BYD2</accession>
<accession>B2RD99</accession>
<accession>Q5SZR2</accession>
<accession>Q9BSW8</accession>
<proteinExistence type="evidence at protein level"/>
<evidence type="ECO:0000250" key="1">
    <source>
        <dbReference type="UniProtKB" id="Q2TBK2"/>
    </source>
</evidence>
<evidence type="ECO:0000269" key="2">
    <source>
    </source>
</evidence>
<evidence type="ECO:0000269" key="3">
    <source>
    </source>
</evidence>
<evidence type="ECO:0000269" key="4">
    <source>
    </source>
</evidence>
<evidence type="ECO:0000269" key="5">
    <source>
    </source>
</evidence>
<evidence type="ECO:0000269" key="6">
    <source>
    </source>
</evidence>
<evidence type="ECO:0000303" key="7">
    <source>
    </source>
</evidence>
<evidence type="ECO:0000305" key="8"/>
<evidence type="ECO:0007744" key="9">
    <source>
        <dbReference type="PDB" id="3J7Y"/>
    </source>
</evidence>
<evidence type="ECO:0007744" key="10">
    <source>
        <dbReference type="PDB" id="3J9M"/>
    </source>
</evidence>
<evidence type="ECO:0007744" key="11">
    <source>
        <dbReference type="PDB" id="5OOL"/>
    </source>
</evidence>
<evidence type="ECO:0007744" key="12">
    <source>
        <dbReference type="PDB" id="5OOM"/>
    </source>
</evidence>
<evidence type="ECO:0007744" key="13">
    <source>
        <dbReference type="PDB" id="7QH6"/>
    </source>
</evidence>
<evidence type="ECO:0007744" key="14">
    <source>
        <dbReference type="PDB" id="7QH7"/>
    </source>
</evidence>
<evidence type="ECO:0007829" key="15">
    <source>
        <dbReference type="PDB" id="7OF0"/>
    </source>
</evidence>
<comment type="subunit">
    <text evidence="3 4 5 6">Component of the mitochondrial large ribosomal subunit (mt-LSU) (PubMed:25278503, PubMed:25838379, PubMed:28892042, PubMed:35177605). Mature mammalian 55S mitochondrial ribosomes consist of a small (28S) and a large (39S) subunit. The 28S small subunit contains a 12S ribosomal RNA (12S mt-rRNA) and 30 different proteins. The 39S large subunit contains a 16S rRNA (16S mt-rRNA), a copy of mitochondrial valine transfer RNA (mt-tRNA(Val)), which plays an integral structural role, and 52 different proteins.</text>
</comment>
<comment type="interaction">
    <interactant intactId="EBI-726059">
        <id>Q9BYD2</id>
    </interactant>
    <interactant intactId="EBI-295634">
        <id>Q16543</id>
        <label>CDC37</label>
    </interactant>
    <organismsDiffer>false</organismsDiffer>
    <experiments>3</experiments>
</comment>
<comment type="interaction">
    <interactant intactId="EBI-726059">
        <id>Q9BYD2</id>
    </interactant>
    <interactant intactId="EBI-10175124">
        <id>Q8IZU0</id>
        <label>FAM9B</label>
    </interactant>
    <organismsDiffer>false</organismsDiffer>
    <experiments>3</experiments>
</comment>
<comment type="interaction">
    <interactant intactId="EBI-726059">
        <id>Q9BYD2</id>
    </interactant>
    <interactant intactId="EBI-7060731">
        <id>P61978-2</id>
        <label>HNRNPK</label>
    </interactant>
    <organismsDiffer>false</organismsDiffer>
    <experiments>3</experiments>
</comment>
<comment type="subcellular location">
    <subcellularLocation>
        <location evidence="3 4 5">Mitochondrion</location>
    </subcellularLocation>
</comment>
<comment type="similarity">
    <text evidence="8">Belongs to the bacterial ribosomal protein bL9 family.</text>
</comment>
<feature type="transit peptide" description="Mitochondrion" evidence="1">
    <location>
        <begin position="1"/>
        <end position="52"/>
    </location>
</feature>
<feature type="chain" id="PRO_0000030550" description="Large ribosomal subunit protein bL9m">
    <location>
        <begin position="53"/>
        <end position="267"/>
    </location>
</feature>
<feature type="sequence variant" id="VAR_028136" description="In dbSNP:rs7007.">
    <original>E</original>
    <variation>G</variation>
    <location>
        <position position="67"/>
    </location>
</feature>
<feature type="sequence variant" id="VAR_028137" description="In dbSNP:rs8480." evidence="2">
    <original>E</original>
    <variation>A</variation>
    <location>
        <position position="210"/>
    </location>
</feature>
<feature type="strand" evidence="15">
    <location>
        <begin position="54"/>
        <end position="60"/>
    </location>
</feature>
<feature type="strand" evidence="15">
    <location>
        <begin position="67"/>
        <end position="69"/>
    </location>
</feature>
<feature type="helix" evidence="15">
    <location>
        <begin position="75"/>
        <end position="78"/>
    </location>
</feature>
<feature type="strand" evidence="15">
    <location>
        <begin position="79"/>
        <end position="85"/>
    </location>
</feature>
<feature type="helix" evidence="15">
    <location>
        <begin position="86"/>
        <end position="88"/>
    </location>
</feature>
<feature type="strand" evidence="15">
    <location>
        <begin position="93"/>
        <end position="100"/>
    </location>
</feature>
<feature type="turn" evidence="15">
    <location>
        <begin position="103"/>
        <end position="105"/>
    </location>
</feature>
<feature type="strand" evidence="15">
    <location>
        <begin position="106"/>
        <end position="109"/>
    </location>
</feature>
<feature type="strand" evidence="15">
    <location>
        <begin position="111"/>
        <end position="115"/>
    </location>
</feature>
<feature type="helix" evidence="15">
    <location>
        <begin position="116"/>
        <end position="121"/>
    </location>
</feature>
<feature type="turn" evidence="15">
    <location>
        <begin position="122"/>
        <end position="127"/>
    </location>
</feature>
<feature type="strand" evidence="15">
    <location>
        <begin position="128"/>
        <end position="131"/>
    </location>
</feature>
<feature type="helix" evidence="15">
    <location>
        <begin position="134"/>
        <end position="146"/>
    </location>
</feature>
<dbReference type="EMBL" id="AB049636">
    <property type="protein sequence ID" value="BAB40841.1"/>
    <property type="molecule type" value="mRNA"/>
</dbReference>
<dbReference type="EMBL" id="AK315459">
    <property type="protein sequence ID" value="BAG37846.1"/>
    <property type="molecule type" value="mRNA"/>
</dbReference>
<dbReference type="EMBL" id="AL589765">
    <property type="status" value="NOT_ANNOTATED_CDS"/>
    <property type="molecule type" value="Genomic_DNA"/>
</dbReference>
<dbReference type="EMBL" id="CH471121">
    <property type="protein sequence ID" value="EAW53415.1"/>
    <property type="molecule type" value="Genomic_DNA"/>
</dbReference>
<dbReference type="EMBL" id="BC004517">
    <property type="protein sequence ID" value="AAH04517.1"/>
    <property type="molecule type" value="mRNA"/>
</dbReference>
<dbReference type="CCDS" id="CCDS1003.1"/>
<dbReference type="RefSeq" id="NP_001287662.1">
    <property type="nucleotide sequence ID" value="NM_001300733.1"/>
</dbReference>
<dbReference type="RefSeq" id="NP_113608.1">
    <property type="nucleotide sequence ID" value="NM_031420.4"/>
</dbReference>
<dbReference type="PDB" id="3J7Y">
    <property type="method" value="EM"/>
    <property type="resolution" value="3.40 A"/>
    <property type="chains" value="H=1-267"/>
</dbReference>
<dbReference type="PDB" id="3J9M">
    <property type="method" value="EM"/>
    <property type="resolution" value="3.50 A"/>
    <property type="chains" value="H=1-267"/>
</dbReference>
<dbReference type="PDB" id="5OOL">
    <property type="method" value="EM"/>
    <property type="resolution" value="3.06 A"/>
    <property type="chains" value="H=1-267"/>
</dbReference>
<dbReference type="PDB" id="5OOM">
    <property type="method" value="EM"/>
    <property type="resolution" value="3.03 A"/>
    <property type="chains" value="H=1-267"/>
</dbReference>
<dbReference type="PDB" id="6I9R">
    <property type="method" value="EM"/>
    <property type="resolution" value="3.90 A"/>
    <property type="chains" value="H=1-267"/>
</dbReference>
<dbReference type="PDB" id="6NU2">
    <property type="method" value="EM"/>
    <property type="resolution" value="3.90 A"/>
    <property type="chains" value="H=53-147"/>
</dbReference>
<dbReference type="PDB" id="6NU3">
    <property type="method" value="EM"/>
    <property type="resolution" value="4.40 A"/>
    <property type="chains" value="H=1-267"/>
</dbReference>
<dbReference type="PDB" id="6VLZ">
    <property type="method" value="EM"/>
    <property type="resolution" value="2.97 A"/>
    <property type="chains" value="H=1-267"/>
</dbReference>
<dbReference type="PDB" id="6VMI">
    <property type="method" value="EM"/>
    <property type="resolution" value="2.96 A"/>
    <property type="chains" value="H=1-267"/>
</dbReference>
<dbReference type="PDB" id="6ZM5">
    <property type="method" value="EM"/>
    <property type="resolution" value="2.89 A"/>
    <property type="chains" value="H=1-267"/>
</dbReference>
<dbReference type="PDB" id="6ZM6">
    <property type="method" value="EM"/>
    <property type="resolution" value="2.59 A"/>
    <property type="chains" value="H=1-267"/>
</dbReference>
<dbReference type="PDB" id="6ZS9">
    <property type="method" value="EM"/>
    <property type="resolution" value="4.00 A"/>
    <property type="chains" value="XH=1-267"/>
</dbReference>
<dbReference type="PDB" id="6ZSA">
    <property type="method" value="EM"/>
    <property type="resolution" value="4.00 A"/>
    <property type="chains" value="XH=1-267"/>
</dbReference>
<dbReference type="PDB" id="6ZSB">
    <property type="method" value="EM"/>
    <property type="resolution" value="4.50 A"/>
    <property type="chains" value="XH=1-267"/>
</dbReference>
<dbReference type="PDB" id="6ZSC">
    <property type="method" value="EM"/>
    <property type="resolution" value="3.50 A"/>
    <property type="chains" value="XH=1-267"/>
</dbReference>
<dbReference type="PDB" id="6ZSD">
    <property type="method" value="EM"/>
    <property type="resolution" value="3.70 A"/>
    <property type="chains" value="XH=1-267"/>
</dbReference>
<dbReference type="PDB" id="6ZSE">
    <property type="method" value="EM"/>
    <property type="resolution" value="5.00 A"/>
    <property type="chains" value="XH=1-267"/>
</dbReference>
<dbReference type="PDB" id="6ZSG">
    <property type="method" value="EM"/>
    <property type="resolution" value="4.00 A"/>
    <property type="chains" value="XH=1-267"/>
</dbReference>
<dbReference type="PDB" id="7A5F">
    <property type="method" value="EM"/>
    <property type="resolution" value="4.40 A"/>
    <property type="chains" value="D/H3=1-267"/>
</dbReference>
<dbReference type="PDB" id="7A5G">
    <property type="method" value="EM"/>
    <property type="resolution" value="4.33 A"/>
    <property type="chains" value="D/H3=1-267"/>
</dbReference>
<dbReference type="PDB" id="7A5H">
    <property type="method" value="EM"/>
    <property type="resolution" value="3.30 A"/>
    <property type="chains" value="H=1-267"/>
</dbReference>
<dbReference type="PDB" id="7A5I">
    <property type="method" value="EM"/>
    <property type="resolution" value="3.70 A"/>
    <property type="chains" value="H3=1-267"/>
</dbReference>
<dbReference type="PDB" id="7A5J">
    <property type="method" value="EM"/>
    <property type="resolution" value="3.10 A"/>
    <property type="chains" value="C/H=1-267"/>
</dbReference>
<dbReference type="PDB" id="7A5K">
    <property type="method" value="EM"/>
    <property type="resolution" value="3.70 A"/>
    <property type="chains" value="D/H3=1-267"/>
</dbReference>
<dbReference type="PDB" id="7L08">
    <property type="method" value="EM"/>
    <property type="resolution" value="3.49 A"/>
    <property type="chains" value="H=1-267"/>
</dbReference>
<dbReference type="PDB" id="7L20">
    <property type="method" value="EM"/>
    <property type="resolution" value="3.15 A"/>
    <property type="chains" value="H=1-267"/>
</dbReference>
<dbReference type="PDB" id="7O9K">
    <property type="method" value="EM"/>
    <property type="resolution" value="3.10 A"/>
    <property type="chains" value="H=1-267"/>
</dbReference>
<dbReference type="PDB" id="7O9M">
    <property type="method" value="EM"/>
    <property type="resolution" value="2.50 A"/>
    <property type="chains" value="H=1-267"/>
</dbReference>
<dbReference type="PDB" id="7ODR">
    <property type="method" value="EM"/>
    <property type="resolution" value="2.90 A"/>
    <property type="chains" value="H=1-267"/>
</dbReference>
<dbReference type="PDB" id="7ODS">
    <property type="method" value="EM"/>
    <property type="resolution" value="3.10 A"/>
    <property type="chains" value="H=1-267"/>
</dbReference>
<dbReference type="PDB" id="7ODT">
    <property type="method" value="EM"/>
    <property type="resolution" value="3.10 A"/>
    <property type="chains" value="H=1-267"/>
</dbReference>
<dbReference type="PDB" id="7OF0">
    <property type="method" value="EM"/>
    <property type="resolution" value="2.20 A"/>
    <property type="chains" value="H=1-267"/>
</dbReference>
<dbReference type="PDB" id="7OF2">
    <property type="method" value="EM"/>
    <property type="resolution" value="2.70 A"/>
    <property type="chains" value="H=1-267"/>
</dbReference>
<dbReference type="PDB" id="7OF3">
    <property type="method" value="EM"/>
    <property type="resolution" value="2.70 A"/>
    <property type="chains" value="H=1-267"/>
</dbReference>
<dbReference type="PDB" id="7OF4">
    <property type="method" value="EM"/>
    <property type="resolution" value="2.70 A"/>
    <property type="chains" value="H=1-267"/>
</dbReference>
<dbReference type="PDB" id="7OF5">
    <property type="method" value="EM"/>
    <property type="resolution" value="2.90 A"/>
    <property type="chains" value="H=1-267"/>
</dbReference>
<dbReference type="PDB" id="7OF6">
    <property type="method" value="EM"/>
    <property type="resolution" value="2.60 A"/>
    <property type="chains" value="H=1-267"/>
</dbReference>
<dbReference type="PDB" id="7OF7">
    <property type="method" value="EM"/>
    <property type="resolution" value="2.50 A"/>
    <property type="chains" value="H=1-267"/>
</dbReference>
<dbReference type="PDB" id="7OG4">
    <property type="method" value="EM"/>
    <property type="resolution" value="3.80 A"/>
    <property type="chains" value="XH=1-267"/>
</dbReference>
<dbReference type="PDB" id="7OI6">
    <property type="method" value="EM"/>
    <property type="resolution" value="5.70 A"/>
    <property type="chains" value="H=1-267"/>
</dbReference>
<dbReference type="PDB" id="7OI7">
    <property type="method" value="EM"/>
    <property type="resolution" value="3.50 A"/>
    <property type="chains" value="H=1-267"/>
</dbReference>
<dbReference type="PDB" id="7OI8">
    <property type="method" value="EM"/>
    <property type="resolution" value="3.50 A"/>
    <property type="chains" value="H=1-267"/>
</dbReference>
<dbReference type="PDB" id="7OI9">
    <property type="method" value="EM"/>
    <property type="resolution" value="3.30 A"/>
    <property type="chains" value="H=1-267"/>
</dbReference>
<dbReference type="PDB" id="7OIA">
    <property type="method" value="EM"/>
    <property type="resolution" value="3.20 A"/>
    <property type="chains" value="H=1-267"/>
</dbReference>
<dbReference type="PDB" id="7OIB">
    <property type="method" value="EM"/>
    <property type="resolution" value="3.30 A"/>
    <property type="chains" value="H=1-267"/>
</dbReference>
<dbReference type="PDB" id="7OIC">
    <property type="method" value="EM"/>
    <property type="resolution" value="3.10 A"/>
    <property type="chains" value="H=1-267"/>
</dbReference>
<dbReference type="PDB" id="7OID">
    <property type="method" value="EM"/>
    <property type="resolution" value="3.70 A"/>
    <property type="chains" value="H=1-267"/>
</dbReference>
<dbReference type="PDB" id="7OIE">
    <property type="method" value="EM"/>
    <property type="resolution" value="3.50 A"/>
    <property type="chains" value="H=1-267"/>
</dbReference>
<dbReference type="PDB" id="7PD3">
    <property type="method" value="EM"/>
    <property type="resolution" value="3.40 A"/>
    <property type="chains" value="C/H=1-267"/>
</dbReference>
<dbReference type="PDB" id="7PO4">
    <property type="method" value="EM"/>
    <property type="resolution" value="2.56 A"/>
    <property type="chains" value="H=1-267"/>
</dbReference>
<dbReference type="PDB" id="7QH6">
    <property type="method" value="EM"/>
    <property type="resolution" value="3.08 A"/>
    <property type="chains" value="H=1-267"/>
</dbReference>
<dbReference type="PDB" id="7QH7">
    <property type="method" value="EM"/>
    <property type="resolution" value="2.89 A"/>
    <property type="chains" value="H=53-147"/>
</dbReference>
<dbReference type="PDB" id="7QI4">
    <property type="method" value="EM"/>
    <property type="resolution" value="2.21 A"/>
    <property type="chains" value="H=1-267"/>
</dbReference>
<dbReference type="PDB" id="7QI5">
    <property type="method" value="EM"/>
    <property type="resolution" value="2.63 A"/>
    <property type="chains" value="H=1-267"/>
</dbReference>
<dbReference type="PDB" id="7QI6">
    <property type="method" value="EM"/>
    <property type="resolution" value="2.98 A"/>
    <property type="chains" value="H=1-267"/>
</dbReference>
<dbReference type="PDB" id="8ANY">
    <property type="method" value="EM"/>
    <property type="resolution" value="2.85 A"/>
    <property type="chains" value="H=1-267"/>
</dbReference>
<dbReference type="PDB" id="8K2A">
    <property type="method" value="EM"/>
    <property type="resolution" value="2.90 A"/>
    <property type="chains" value="LI=1-267"/>
</dbReference>
<dbReference type="PDB" id="8K2B">
    <property type="method" value="EM"/>
    <property type="resolution" value="3.40 A"/>
    <property type="chains" value="LI=1-267"/>
</dbReference>
<dbReference type="PDB" id="8OIR">
    <property type="method" value="EM"/>
    <property type="resolution" value="3.10 A"/>
    <property type="chains" value="BO=1-267"/>
</dbReference>
<dbReference type="PDB" id="8OIT">
    <property type="method" value="EM"/>
    <property type="resolution" value="2.90 A"/>
    <property type="chains" value="BO=1-267"/>
</dbReference>
<dbReference type="PDB" id="8PK0">
    <property type="method" value="EM"/>
    <property type="resolution" value="3.03 A"/>
    <property type="chains" value="H=1-267"/>
</dbReference>
<dbReference type="PDB" id="8QSJ">
    <property type="method" value="EM"/>
    <property type="resolution" value="3.00 A"/>
    <property type="chains" value="H=1-267"/>
</dbReference>
<dbReference type="PDB" id="8QU1">
    <property type="method" value="EM"/>
    <property type="resolution" value="2.74 A"/>
    <property type="chains" value="H=1-267"/>
</dbReference>
<dbReference type="PDB" id="8QU5">
    <property type="method" value="EM"/>
    <property type="resolution" value="2.42 A"/>
    <property type="chains" value="H=1-267"/>
</dbReference>
<dbReference type="PDB" id="8RRI">
    <property type="method" value="EM"/>
    <property type="resolution" value="2.40 A"/>
    <property type="chains" value="H=1-267"/>
</dbReference>
<dbReference type="PDB" id="8XT0">
    <property type="method" value="EM"/>
    <property type="resolution" value="3.20 A"/>
    <property type="chains" value="LI=1-267"/>
</dbReference>
<dbReference type="PDB" id="8XT1">
    <property type="method" value="EM"/>
    <property type="resolution" value="3.10 A"/>
    <property type="chains" value="LI=1-267"/>
</dbReference>
<dbReference type="PDB" id="8XT2">
    <property type="method" value="EM"/>
    <property type="resolution" value="3.30 A"/>
    <property type="chains" value="LI=1-267"/>
</dbReference>
<dbReference type="PDB" id="8XT3">
    <property type="method" value="EM"/>
    <property type="resolution" value="3.10 A"/>
    <property type="chains" value="LI=1-267"/>
</dbReference>
<dbReference type="PDBsum" id="3J7Y"/>
<dbReference type="PDBsum" id="3J9M"/>
<dbReference type="PDBsum" id="5OOL"/>
<dbReference type="PDBsum" id="5OOM"/>
<dbReference type="PDBsum" id="6I9R"/>
<dbReference type="PDBsum" id="6NU2"/>
<dbReference type="PDBsum" id="6NU3"/>
<dbReference type="PDBsum" id="6VLZ"/>
<dbReference type="PDBsum" id="6VMI"/>
<dbReference type="PDBsum" id="6ZM5"/>
<dbReference type="PDBsum" id="6ZM6"/>
<dbReference type="PDBsum" id="6ZS9"/>
<dbReference type="PDBsum" id="6ZSA"/>
<dbReference type="PDBsum" id="6ZSB"/>
<dbReference type="PDBsum" id="6ZSC"/>
<dbReference type="PDBsum" id="6ZSD"/>
<dbReference type="PDBsum" id="6ZSE"/>
<dbReference type="PDBsum" id="6ZSG"/>
<dbReference type="PDBsum" id="7A5F"/>
<dbReference type="PDBsum" id="7A5G"/>
<dbReference type="PDBsum" id="7A5H"/>
<dbReference type="PDBsum" id="7A5I"/>
<dbReference type="PDBsum" id="7A5J"/>
<dbReference type="PDBsum" id="7A5K"/>
<dbReference type="PDBsum" id="7L08"/>
<dbReference type="PDBsum" id="7L20"/>
<dbReference type="PDBsum" id="7O9K"/>
<dbReference type="PDBsum" id="7O9M"/>
<dbReference type="PDBsum" id="7ODR"/>
<dbReference type="PDBsum" id="7ODS"/>
<dbReference type="PDBsum" id="7ODT"/>
<dbReference type="PDBsum" id="7OF0"/>
<dbReference type="PDBsum" id="7OF2"/>
<dbReference type="PDBsum" id="7OF3"/>
<dbReference type="PDBsum" id="7OF4"/>
<dbReference type="PDBsum" id="7OF5"/>
<dbReference type="PDBsum" id="7OF6"/>
<dbReference type="PDBsum" id="7OF7"/>
<dbReference type="PDBsum" id="7OG4"/>
<dbReference type="PDBsum" id="7OI6"/>
<dbReference type="PDBsum" id="7OI7"/>
<dbReference type="PDBsum" id="7OI8"/>
<dbReference type="PDBsum" id="7OI9"/>
<dbReference type="PDBsum" id="7OIA"/>
<dbReference type="PDBsum" id="7OIB"/>
<dbReference type="PDBsum" id="7OIC"/>
<dbReference type="PDBsum" id="7OID"/>
<dbReference type="PDBsum" id="7OIE"/>
<dbReference type="PDBsum" id="7PD3"/>
<dbReference type="PDBsum" id="7PO4"/>
<dbReference type="PDBsum" id="7QH6"/>
<dbReference type="PDBsum" id="7QH7"/>
<dbReference type="PDBsum" id="7QI4"/>
<dbReference type="PDBsum" id="7QI5"/>
<dbReference type="PDBsum" id="7QI6"/>
<dbReference type="PDBsum" id="8ANY"/>
<dbReference type="PDBsum" id="8K2A"/>
<dbReference type="PDBsum" id="8K2B"/>
<dbReference type="PDBsum" id="8OIR"/>
<dbReference type="PDBsum" id="8OIT"/>
<dbReference type="PDBsum" id="8PK0"/>
<dbReference type="PDBsum" id="8QSJ"/>
<dbReference type="PDBsum" id="8QU1"/>
<dbReference type="PDBsum" id="8QU5"/>
<dbReference type="PDBsum" id="8RRI"/>
<dbReference type="PDBsum" id="8XT0"/>
<dbReference type="PDBsum" id="8XT1"/>
<dbReference type="PDBsum" id="8XT2"/>
<dbReference type="PDBsum" id="8XT3"/>
<dbReference type="EMDB" id="EMD-0514"/>
<dbReference type="EMDB" id="EMD-0515"/>
<dbReference type="EMDB" id="EMD-11278"/>
<dbReference type="EMDB" id="EMD-11279"/>
<dbReference type="EMDB" id="EMD-11390"/>
<dbReference type="EMDB" id="EMD-11391"/>
<dbReference type="EMDB" id="EMD-11392"/>
<dbReference type="EMDB" id="EMD-11393"/>
<dbReference type="EMDB" id="EMD-11394"/>
<dbReference type="EMDB" id="EMD-11395"/>
<dbReference type="EMDB" id="EMD-11397"/>
<dbReference type="EMDB" id="EMD-11641"/>
<dbReference type="EMDB" id="EMD-11642"/>
<dbReference type="EMDB" id="EMD-11643"/>
<dbReference type="EMDB" id="EMD-11644"/>
<dbReference type="EMDB" id="EMD-11645"/>
<dbReference type="EMDB" id="EMD-11646"/>
<dbReference type="EMDB" id="EMD-12763"/>
<dbReference type="EMDB" id="EMD-12764"/>
<dbReference type="EMDB" id="EMD-12845"/>
<dbReference type="EMDB" id="EMD-12846"/>
<dbReference type="EMDB" id="EMD-12847"/>
<dbReference type="EMDB" id="EMD-12865"/>
<dbReference type="EMDB" id="EMD-12867"/>
<dbReference type="EMDB" id="EMD-12868"/>
<dbReference type="EMDB" id="EMD-12869"/>
<dbReference type="EMDB" id="EMD-12870"/>
<dbReference type="EMDB" id="EMD-12871"/>
<dbReference type="EMDB" id="EMD-12872"/>
<dbReference type="EMDB" id="EMD-12877"/>
<dbReference type="EMDB" id="EMD-12919"/>
<dbReference type="EMDB" id="EMD-12920"/>
<dbReference type="EMDB" id="EMD-12921"/>
<dbReference type="EMDB" id="EMD-12922"/>
<dbReference type="EMDB" id="EMD-12923"/>
<dbReference type="EMDB" id="EMD-12924"/>
<dbReference type="EMDB" id="EMD-12925"/>
<dbReference type="EMDB" id="EMD-12926"/>
<dbReference type="EMDB" id="EMD-12927"/>
<dbReference type="EMDB" id="EMD-13329"/>
<dbReference type="EMDB" id="EMD-13562"/>
<dbReference type="EMDB" id="EMD-13965"/>
<dbReference type="EMDB" id="EMD-13967"/>
<dbReference type="EMDB" id="EMD-13980"/>
<dbReference type="EMDB" id="EMD-13981"/>
<dbReference type="EMDB" id="EMD-13982"/>
<dbReference type="EMDB" id="EMD-15544"/>
<dbReference type="EMDB" id="EMD-16897"/>
<dbReference type="EMDB" id="EMD-16899"/>
<dbReference type="EMDB" id="EMD-17719"/>
<dbReference type="EMDB" id="EMD-19460"/>
<dbReference type="EMDB" id="EMD-21233"/>
<dbReference type="EMDB" id="EMD-21242"/>
<dbReference type="EMDB" id="EMD-23096"/>
<dbReference type="EMDB" id="EMD-23121"/>
<dbReference type="EMDB" id="EMD-36836"/>
<dbReference type="EMDB" id="EMD-36837"/>
<dbReference type="EMDB" id="EMD-3842"/>
<dbReference type="EMDB" id="EMD-3843"/>
<dbReference type="EMDB" id="EMD-38632"/>
<dbReference type="EMDB" id="EMD-38633"/>
<dbReference type="EMDB" id="EMD-38634"/>
<dbReference type="EMDB" id="EMD-38635"/>
<dbReference type="EMDB" id="EMD-4434"/>
<dbReference type="SMR" id="Q9BYD2"/>
<dbReference type="BioGRID" id="122370">
    <property type="interactions" value="220"/>
</dbReference>
<dbReference type="ComplexPortal" id="CPX-5226">
    <property type="entry name" value="39S mitochondrial large ribosomal subunit"/>
</dbReference>
<dbReference type="CORUM" id="Q9BYD2"/>
<dbReference type="FunCoup" id="Q9BYD2">
    <property type="interactions" value="2328"/>
</dbReference>
<dbReference type="IntAct" id="Q9BYD2">
    <property type="interactions" value="140"/>
</dbReference>
<dbReference type="MINT" id="Q9BYD2"/>
<dbReference type="STRING" id="9606.ENSP00000357823"/>
<dbReference type="iPTMnet" id="Q9BYD2"/>
<dbReference type="PhosphoSitePlus" id="Q9BYD2"/>
<dbReference type="BioMuta" id="MRPL9"/>
<dbReference type="DMDM" id="209572671"/>
<dbReference type="jPOST" id="Q9BYD2"/>
<dbReference type="MassIVE" id="Q9BYD2"/>
<dbReference type="PaxDb" id="9606-ENSP00000357823"/>
<dbReference type="PeptideAtlas" id="Q9BYD2"/>
<dbReference type="ProteomicsDB" id="79616"/>
<dbReference type="Pumba" id="Q9BYD2"/>
<dbReference type="Antibodypedia" id="1667">
    <property type="antibodies" value="186 antibodies from 26 providers"/>
</dbReference>
<dbReference type="DNASU" id="65005"/>
<dbReference type="Ensembl" id="ENST00000368830.8">
    <property type="protein sequence ID" value="ENSP00000357823.3"/>
    <property type="gene ID" value="ENSG00000143436.11"/>
</dbReference>
<dbReference type="GeneID" id="65005"/>
<dbReference type="KEGG" id="hsa:65005"/>
<dbReference type="MANE-Select" id="ENST00000368830.8">
    <property type="protein sequence ID" value="ENSP00000357823.3"/>
    <property type="RefSeq nucleotide sequence ID" value="NM_031420.4"/>
    <property type="RefSeq protein sequence ID" value="NP_113608.1"/>
</dbReference>
<dbReference type="UCSC" id="uc001eyv.4">
    <property type="organism name" value="human"/>
</dbReference>
<dbReference type="AGR" id="HGNC:14277"/>
<dbReference type="CTD" id="65005"/>
<dbReference type="DisGeNET" id="65005"/>
<dbReference type="GeneCards" id="MRPL9"/>
<dbReference type="HGNC" id="HGNC:14277">
    <property type="gene designation" value="MRPL9"/>
</dbReference>
<dbReference type="HPA" id="ENSG00000143436">
    <property type="expression patterns" value="Low tissue specificity"/>
</dbReference>
<dbReference type="MIM" id="611824">
    <property type="type" value="gene"/>
</dbReference>
<dbReference type="neXtProt" id="NX_Q9BYD2"/>
<dbReference type="OpenTargets" id="ENSG00000143436"/>
<dbReference type="PharmGKB" id="PA30991"/>
<dbReference type="VEuPathDB" id="HostDB:ENSG00000143436"/>
<dbReference type="eggNOG" id="KOG4607">
    <property type="taxonomic scope" value="Eukaryota"/>
</dbReference>
<dbReference type="GeneTree" id="ENSGT00390000008281"/>
<dbReference type="HOGENOM" id="CLU_078938_0_0_1"/>
<dbReference type="InParanoid" id="Q9BYD2"/>
<dbReference type="OMA" id="AKHFIYE"/>
<dbReference type="OrthoDB" id="5555409at2759"/>
<dbReference type="PAN-GO" id="Q9BYD2">
    <property type="GO annotations" value="1 GO annotation based on evolutionary models"/>
</dbReference>
<dbReference type="PhylomeDB" id="Q9BYD2"/>
<dbReference type="TreeFam" id="TF300170"/>
<dbReference type="PathwayCommons" id="Q9BYD2"/>
<dbReference type="Reactome" id="R-HSA-5368286">
    <property type="pathway name" value="Mitochondrial translation initiation"/>
</dbReference>
<dbReference type="Reactome" id="R-HSA-5389840">
    <property type="pathway name" value="Mitochondrial translation elongation"/>
</dbReference>
<dbReference type="Reactome" id="R-HSA-5419276">
    <property type="pathway name" value="Mitochondrial translation termination"/>
</dbReference>
<dbReference type="SignaLink" id="Q9BYD2"/>
<dbReference type="SIGNOR" id="Q9BYD2"/>
<dbReference type="BioGRID-ORCS" id="65005">
    <property type="hits" value="345 hits in 1175 CRISPR screens"/>
</dbReference>
<dbReference type="ChiTaRS" id="MRPL9">
    <property type="organism name" value="human"/>
</dbReference>
<dbReference type="GenomeRNAi" id="65005"/>
<dbReference type="Pharos" id="Q9BYD2">
    <property type="development level" value="Tdark"/>
</dbReference>
<dbReference type="PRO" id="PR:Q9BYD2"/>
<dbReference type="Proteomes" id="UP000005640">
    <property type="component" value="Chromosome 1"/>
</dbReference>
<dbReference type="RNAct" id="Q9BYD2">
    <property type="molecule type" value="protein"/>
</dbReference>
<dbReference type="Bgee" id="ENSG00000143436">
    <property type="expression patterns" value="Expressed in endometrium epithelium and 205 other cell types or tissues"/>
</dbReference>
<dbReference type="ExpressionAtlas" id="Q9BYD2">
    <property type="expression patterns" value="baseline and differential"/>
</dbReference>
<dbReference type="GO" id="GO:0005743">
    <property type="term" value="C:mitochondrial inner membrane"/>
    <property type="evidence" value="ECO:0000304"/>
    <property type="project" value="Reactome"/>
</dbReference>
<dbReference type="GO" id="GO:0005762">
    <property type="term" value="C:mitochondrial large ribosomal subunit"/>
    <property type="evidence" value="ECO:0000314"/>
    <property type="project" value="UniProtKB"/>
</dbReference>
<dbReference type="GO" id="GO:0005761">
    <property type="term" value="C:mitochondrial ribosome"/>
    <property type="evidence" value="ECO:0000303"/>
    <property type="project" value="UniProtKB"/>
</dbReference>
<dbReference type="GO" id="GO:0005739">
    <property type="term" value="C:mitochondrion"/>
    <property type="evidence" value="ECO:0000314"/>
    <property type="project" value="UniProtKB"/>
</dbReference>
<dbReference type="GO" id="GO:0003723">
    <property type="term" value="F:RNA binding"/>
    <property type="evidence" value="ECO:0007005"/>
    <property type="project" value="UniProtKB"/>
</dbReference>
<dbReference type="GO" id="GO:0003735">
    <property type="term" value="F:structural constituent of ribosome"/>
    <property type="evidence" value="ECO:0000303"/>
    <property type="project" value="UniProtKB"/>
</dbReference>
<dbReference type="GO" id="GO:0032543">
    <property type="term" value="P:mitochondrial translation"/>
    <property type="evidence" value="ECO:0000303"/>
    <property type="project" value="ComplexPortal"/>
</dbReference>
<dbReference type="GO" id="GO:0006412">
    <property type="term" value="P:translation"/>
    <property type="evidence" value="ECO:0000303"/>
    <property type="project" value="UniProtKB"/>
</dbReference>
<dbReference type="FunFam" id="3.40.5.10:FF:000005">
    <property type="entry name" value="39S ribosomal protein L9, mitochondrial"/>
    <property type="match status" value="1"/>
</dbReference>
<dbReference type="Gene3D" id="3.40.5.10">
    <property type="entry name" value="Ribosomal protein L9, N-terminal domain"/>
    <property type="match status" value="1"/>
</dbReference>
<dbReference type="InterPro" id="IPR056864">
    <property type="entry name" value="MRP-L9_N"/>
</dbReference>
<dbReference type="InterPro" id="IPR000244">
    <property type="entry name" value="Ribosomal_bL9"/>
</dbReference>
<dbReference type="InterPro" id="IPR009027">
    <property type="entry name" value="Ribosomal_bL9/RNase_H1_N"/>
</dbReference>
<dbReference type="InterPro" id="IPR020070">
    <property type="entry name" value="Ribosomal_bL9_N"/>
</dbReference>
<dbReference type="InterPro" id="IPR036935">
    <property type="entry name" value="Ribosomal_bL9_N_sf"/>
</dbReference>
<dbReference type="InterPro" id="IPR054302">
    <property type="entry name" value="Ribosomal_bL9m_C"/>
</dbReference>
<dbReference type="PANTHER" id="PTHR21368">
    <property type="entry name" value="50S RIBOSOMAL PROTEIN L9"/>
    <property type="match status" value="1"/>
</dbReference>
<dbReference type="Pfam" id="PF25131">
    <property type="entry name" value="bL9m_N"/>
    <property type="match status" value="1"/>
</dbReference>
<dbReference type="Pfam" id="PF22078">
    <property type="entry name" value="Ribosomal_bL9m_C"/>
    <property type="match status" value="1"/>
</dbReference>
<dbReference type="Pfam" id="PF01281">
    <property type="entry name" value="Ribosomal_L9_N"/>
    <property type="match status" value="1"/>
</dbReference>
<dbReference type="SUPFAM" id="SSF55658">
    <property type="entry name" value="L9 N-domain-like"/>
    <property type="match status" value="1"/>
</dbReference>
<sequence>MAAPVVTAPGRALLRAGAGRLLRGGVQELLRPRHEGNAPDLACNFSLSQNRGTVIVERWWKVPLAGEGRKPRLHRRHRVYKLVEDTKHRPKENLELILTQSVENVGVRGDLVSVKKSLGRNRLLPQGLAVYASPENKKLFEEEKLLRQEGKLEKIQTKAGEATVKFLKSCRLEVGMKNNVKWELNPEIVARHFFKNLGVVVAPHTLKLPEEPITRWGEYWCEVTVNGLDTVRVPMSVVNFEKPKTKRYKYWLAQQAAKAMAPTSPQI</sequence>
<protein>
    <recommendedName>
        <fullName evidence="7">Large ribosomal subunit protein bL9m</fullName>
    </recommendedName>
    <alternativeName>
        <fullName>39S ribosomal protein L9, mitochondrial</fullName>
        <shortName>L9mt</shortName>
        <shortName>MRP-L9</shortName>
    </alternativeName>
</protein>
<reference key="1">
    <citation type="journal article" date="2001" name="J. Biol. Chem.">
        <title>Structural compensation for the deficit of rRNA with proteins in the mammalian mitochondrial ribosome. Systematic analysis of protein components of the large ribosomal subunit from mammalian mitochondria.</title>
        <authorList>
            <person name="Suzuki T."/>
            <person name="Terasaki M."/>
            <person name="Takemoto-Hori C."/>
            <person name="Hanada T."/>
            <person name="Ueda T."/>
            <person name="Wada A."/>
            <person name="Watanabe K."/>
        </authorList>
    </citation>
    <scope>NUCLEOTIDE SEQUENCE [MRNA]</scope>
    <scope>VARIANT ALA-210</scope>
</reference>
<reference key="2">
    <citation type="journal article" date="2004" name="Nat. Genet.">
        <title>Complete sequencing and characterization of 21,243 full-length human cDNAs.</title>
        <authorList>
            <person name="Ota T."/>
            <person name="Suzuki Y."/>
            <person name="Nishikawa T."/>
            <person name="Otsuki T."/>
            <person name="Sugiyama T."/>
            <person name="Irie R."/>
            <person name="Wakamatsu A."/>
            <person name="Hayashi K."/>
            <person name="Sato H."/>
            <person name="Nagai K."/>
            <person name="Kimura K."/>
            <person name="Makita H."/>
            <person name="Sekine M."/>
            <person name="Obayashi M."/>
            <person name="Nishi T."/>
            <person name="Shibahara T."/>
            <person name="Tanaka T."/>
            <person name="Ishii S."/>
            <person name="Yamamoto J."/>
            <person name="Saito K."/>
            <person name="Kawai Y."/>
            <person name="Isono Y."/>
            <person name="Nakamura Y."/>
            <person name="Nagahari K."/>
            <person name="Murakami K."/>
            <person name="Yasuda T."/>
            <person name="Iwayanagi T."/>
            <person name="Wagatsuma M."/>
            <person name="Shiratori A."/>
            <person name="Sudo H."/>
            <person name="Hosoiri T."/>
            <person name="Kaku Y."/>
            <person name="Kodaira H."/>
            <person name="Kondo H."/>
            <person name="Sugawara M."/>
            <person name="Takahashi M."/>
            <person name="Kanda K."/>
            <person name="Yokoi T."/>
            <person name="Furuya T."/>
            <person name="Kikkawa E."/>
            <person name="Omura Y."/>
            <person name="Abe K."/>
            <person name="Kamihara K."/>
            <person name="Katsuta N."/>
            <person name="Sato K."/>
            <person name="Tanikawa M."/>
            <person name="Yamazaki M."/>
            <person name="Ninomiya K."/>
            <person name="Ishibashi T."/>
            <person name="Yamashita H."/>
            <person name="Murakawa K."/>
            <person name="Fujimori K."/>
            <person name="Tanai H."/>
            <person name="Kimata M."/>
            <person name="Watanabe M."/>
            <person name="Hiraoka S."/>
            <person name="Chiba Y."/>
            <person name="Ishida S."/>
            <person name="Ono Y."/>
            <person name="Takiguchi S."/>
            <person name="Watanabe S."/>
            <person name="Yosida M."/>
            <person name="Hotuta T."/>
            <person name="Kusano J."/>
            <person name="Kanehori K."/>
            <person name="Takahashi-Fujii A."/>
            <person name="Hara H."/>
            <person name="Tanase T.-O."/>
            <person name="Nomura Y."/>
            <person name="Togiya S."/>
            <person name="Komai F."/>
            <person name="Hara R."/>
            <person name="Takeuchi K."/>
            <person name="Arita M."/>
            <person name="Imose N."/>
            <person name="Musashino K."/>
            <person name="Yuuki H."/>
            <person name="Oshima A."/>
            <person name="Sasaki N."/>
            <person name="Aotsuka S."/>
            <person name="Yoshikawa Y."/>
            <person name="Matsunawa H."/>
            <person name="Ichihara T."/>
            <person name="Shiohata N."/>
            <person name="Sano S."/>
            <person name="Moriya S."/>
            <person name="Momiyama H."/>
            <person name="Satoh N."/>
            <person name="Takami S."/>
            <person name="Terashima Y."/>
            <person name="Suzuki O."/>
            <person name="Nakagawa S."/>
            <person name="Senoh A."/>
            <person name="Mizoguchi H."/>
            <person name="Goto Y."/>
            <person name="Shimizu F."/>
            <person name="Wakebe H."/>
            <person name="Hishigaki H."/>
            <person name="Watanabe T."/>
            <person name="Sugiyama A."/>
            <person name="Takemoto M."/>
            <person name="Kawakami B."/>
            <person name="Yamazaki M."/>
            <person name="Watanabe K."/>
            <person name="Kumagai A."/>
            <person name="Itakura S."/>
            <person name="Fukuzumi Y."/>
            <person name="Fujimori Y."/>
            <person name="Komiyama M."/>
            <person name="Tashiro H."/>
            <person name="Tanigami A."/>
            <person name="Fujiwara T."/>
            <person name="Ono T."/>
            <person name="Yamada K."/>
            <person name="Fujii Y."/>
            <person name="Ozaki K."/>
            <person name="Hirao M."/>
            <person name="Ohmori Y."/>
            <person name="Kawabata A."/>
            <person name="Hikiji T."/>
            <person name="Kobatake N."/>
            <person name="Inagaki H."/>
            <person name="Ikema Y."/>
            <person name="Okamoto S."/>
            <person name="Okitani R."/>
            <person name="Kawakami T."/>
            <person name="Noguchi S."/>
            <person name="Itoh T."/>
            <person name="Shigeta K."/>
            <person name="Senba T."/>
            <person name="Matsumura K."/>
            <person name="Nakajima Y."/>
            <person name="Mizuno T."/>
            <person name="Morinaga M."/>
            <person name="Sasaki M."/>
            <person name="Togashi T."/>
            <person name="Oyama M."/>
            <person name="Hata H."/>
            <person name="Watanabe M."/>
            <person name="Komatsu T."/>
            <person name="Mizushima-Sugano J."/>
            <person name="Satoh T."/>
            <person name="Shirai Y."/>
            <person name="Takahashi Y."/>
            <person name="Nakagawa K."/>
            <person name="Okumura K."/>
            <person name="Nagase T."/>
            <person name="Nomura N."/>
            <person name="Kikuchi H."/>
            <person name="Masuho Y."/>
            <person name="Yamashita R."/>
            <person name="Nakai K."/>
            <person name="Yada T."/>
            <person name="Nakamura Y."/>
            <person name="Ohara O."/>
            <person name="Isogai T."/>
            <person name="Sugano S."/>
        </authorList>
    </citation>
    <scope>NUCLEOTIDE SEQUENCE [LARGE SCALE MRNA]</scope>
</reference>
<reference key="3">
    <citation type="journal article" date="2006" name="Nature">
        <title>The DNA sequence and biological annotation of human chromosome 1.</title>
        <authorList>
            <person name="Gregory S.G."/>
            <person name="Barlow K.F."/>
            <person name="McLay K.E."/>
            <person name="Kaul R."/>
            <person name="Swarbreck D."/>
            <person name="Dunham A."/>
            <person name="Scott C.E."/>
            <person name="Howe K.L."/>
            <person name="Woodfine K."/>
            <person name="Spencer C.C.A."/>
            <person name="Jones M.C."/>
            <person name="Gillson C."/>
            <person name="Searle S."/>
            <person name="Zhou Y."/>
            <person name="Kokocinski F."/>
            <person name="McDonald L."/>
            <person name="Evans R."/>
            <person name="Phillips K."/>
            <person name="Atkinson A."/>
            <person name="Cooper R."/>
            <person name="Jones C."/>
            <person name="Hall R.E."/>
            <person name="Andrews T.D."/>
            <person name="Lloyd C."/>
            <person name="Ainscough R."/>
            <person name="Almeida J.P."/>
            <person name="Ambrose K.D."/>
            <person name="Anderson F."/>
            <person name="Andrew R.W."/>
            <person name="Ashwell R.I.S."/>
            <person name="Aubin K."/>
            <person name="Babbage A.K."/>
            <person name="Bagguley C.L."/>
            <person name="Bailey J."/>
            <person name="Beasley H."/>
            <person name="Bethel G."/>
            <person name="Bird C.P."/>
            <person name="Bray-Allen S."/>
            <person name="Brown J.Y."/>
            <person name="Brown A.J."/>
            <person name="Buckley D."/>
            <person name="Burton J."/>
            <person name="Bye J."/>
            <person name="Carder C."/>
            <person name="Chapman J.C."/>
            <person name="Clark S.Y."/>
            <person name="Clarke G."/>
            <person name="Clee C."/>
            <person name="Cobley V."/>
            <person name="Collier R.E."/>
            <person name="Corby N."/>
            <person name="Coville G.J."/>
            <person name="Davies J."/>
            <person name="Deadman R."/>
            <person name="Dunn M."/>
            <person name="Earthrowl M."/>
            <person name="Ellington A.G."/>
            <person name="Errington H."/>
            <person name="Frankish A."/>
            <person name="Frankland J."/>
            <person name="French L."/>
            <person name="Garner P."/>
            <person name="Garnett J."/>
            <person name="Gay L."/>
            <person name="Ghori M.R.J."/>
            <person name="Gibson R."/>
            <person name="Gilby L.M."/>
            <person name="Gillett W."/>
            <person name="Glithero R.J."/>
            <person name="Grafham D.V."/>
            <person name="Griffiths C."/>
            <person name="Griffiths-Jones S."/>
            <person name="Grocock R."/>
            <person name="Hammond S."/>
            <person name="Harrison E.S.I."/>
            <person name="Hart E."/>
            <person name="Haugen E."/>
            <person name="Heath P.D."/>
            <person name="Holmes S."/>
            <person name="Holt K."/>
            <person name="Howden P.J."/>
            <person name="Hunt A.R."/>
            <person name="Hunt S.E."/>
            <person name="Hunter G."/>
            <person name="Isherwood J."/>
            <person name="James R."/>
            <person name="Johnson C."/>
            <person name="Johnson D."/>
            <person name="Joy A."/>
            <person name="Kay M."/>
            <person name="Kershaw J.K."/>
            <person name="Kibukawa M."/>
            <person name="Kimberley A.M."/>
            <person name="King A."/>
            <person name="Knights A.J."/>
            <person name="Lad H."/>
            <person name="Laird G."/>
            <person name="Lawlor S."/>
            <person name="Leongamornlert D.A."/>
            <person name="Lloyd D.M."/>
            <person name="Loveland J."/>
            <person name="Lovell J."/>
            <person name="Lush M.J."/>
            <person name="Lyne R."/>
            <person name="Martin S."/>
            <person name="Mashreghi-Mohammadi M."/>
            <person name="Matthews L."/>
            <person name="Matthews N.S.W."/>
            <person name="McLaren S."/>
            <person name="Milne S."/>
            <person name="Mistry S."/>
            <person name="Moore M.J.F."/>
            <person name="Nickerson T."/>
            <person name="O'Dell C.N."/>
            <person name="Oliver K."/>
            <person name="Palmeiri A."/>
            <person name="Palmer S.A."/>
            <person name="Parker A."/>
            <person name="Patel D."/>
            <person name="Pearce A.V."/>
            <person name="Peck A.I."/>
            <person name="Pelan S."/>
            <person name="Phelps K."/>
            <person name="Phillimore B.J."/>
            <person name="Plumb R."/>
            <person name="Rajan J."/>
            <person name="Raymond C."/>
            <person name="Rouse G."/>
            <person name="Saenphimmachak C."/>
            <person name="Sehra H.K."/>
            <person name="Sheridan E."/>
            <person name="Shownkeen R."/>
            <person name="Sims S."/>
            <person name="Skuce C.D."/>
            <person name="Smith M."/>
            <person name="Steward C."/>
            <person name="Subramanian S."/>
            <person name="Sycamore N."/>
            <person name="Tracey A."/>
            <person name="Tromans A."/>
            <person name="Van Helmond Z."/>
            <person name="Wall M."/>
            <person name="Wallis J.M."/>
            <person name="White S."/>
            <person name="Whitehead S.L."/>
            <person name="Wilkinson J.E."/>
            <person name="Willey D.L."/>
            <person name="Williams H."/>
            <person name="Wilming L."/>
            <person name="Wray P.W."/>
            <person name="Wu Z."/>
            <person name="Coulson A."/>
            <person name="Vaudin M."/>
            <person name="Sulston J.E."/>
            <person name="Durbin R.M."/>
            <person name="Hubbard T."/>
            <person name="Wooster R."/>
            <person name="Dunham I."/>
            <person name="Carter N.P."/>
            <person name="McVean G."/>
            <person name="Ross M.T."/>
            <person name="Harrow J."/>
            <person name="Olson M.V."/>
            <person name="Beck S."/>
            <person name="Rogers J."/>
            <person name="Bentley D.R."/>
        </authorList>
    </citation>
    <scope>NUCLEOTIDE SEQUENCE [LARGE SCALE GENOMIC DNA]</scope>
</reference>
<reference key="4">
    <citation type="submission" date="2005-09" db="EMBL/GenBank/DDBJ databases">
        <authorList>
            <person name="Mural R.J."/>
            <person name="Istrail S."/>
            <person name="Sutton G.G."/>
            <person name="Florea L."/>
            <person name="Halpern A.L."/>
            <person name="Mobarry C.M."/>
            <person name="Lippert R."/>
            <person name="Walenz B."/>
            <person name="Shatkay H."/>
            <person name="Dew I."/>
            <person name="Miller J.R."/>
            <person name="Flanigan M.J."/>
            <person name="Edwards N.J."/>
            <person name="Bolanos R."/>
            <person name="Fasulo D."/>
            <person name="Halldorsson B.V."/>
            <person name="Hannenhalli S."/>
            <person name="Turner R."/>
            <person name="Yooseph S."/>
            <person name="Lu F."/>
            <person name="Nusskern D.R."/>
            <person name="Shue B.C."/>
            <person name="Zheng X.H."/>
            <person name="Zhong F."/>
            <person name="Delcher A.L."/>
            <person name="Huson D.H."/>
            <person name="Kravitz S.A."/>
            <person name="Mouchard L."/>
            <person name="Reinert K."/>
            <person name="Remington K.A."/>
            <person name="Clark A.G."/>
            <person name="Waterman M.S."/>
            <person name="Eichler E.E."/>
            <person name="Adams M.D."/>
            <person name="Hunkapiller M.W."/>
            <person name="Myers E.W."/>
            <person name="Venter J.C."/>
        </authorList>
    </citation>
    <scope>NUCLEOTIDE SEQUENCE [LARGE SCALE GENOMIC DNA]</scope>
</reference>
<reference key="5">
    <citation type="journal article" date="2004" name="Genome Res.">
        <title>The status, quality, and expansion of the NIH full-length cDNA project: the Mammalian Gene Collection (MGC).</title>
        <authorList>
            <consortium name="The MGC Project Team"/>
        </authorList>
    </citation>
    <scope>NUCLEOTIDE SEQUENCE [LARGE SCALE MRNA]</scope>
    <source>
        <tissue>Lung</tissue>
    </source>
</reference>
<reference key="6">
    <citation type="journal article" date="2011" name="BMC Syst. Biol.">
        <title>Initial characterization of the human central proteome.</title>
        <authorList>
            <person name="Burkard T.R."/>
            <person name="Planyavsky M."/>
            <person name="Kaupe I."/>
            <person name="Breitwieser F.P."/>
            <person name="Buerckstuemmer T."/>
            <person name="Bennett K.L."/>
            <person name="Superti-Furga G."/>
            <person name="Colinge J."/>
        </authorList>
    </citation>
    <scope>IDENTIFICATION BY MASS SPECTROMETRY [LARGE SCALE ANALYSIS]</scope>
</reference>
<reference key="7">
    <citation type="journal article" date="2015" name="Proteomics">
        <title>N-terminome analysis of the human mitochondrial proteome.</title>
        <authorList>
            <person name="Vaca Jacome A.S."/>
            <person name="Rabilloud T."/>
            <person name="Schaeffer-Reiss C."/>
            <person name="Rompais M."/>
            <person name="Ayoub D."/>
            <person name="Lane L."/>
            <person name="Bairoch A."/>
            <person name="Van Dorsselaer A."/>
            <person name="Carapito C."/>
        </authorList>
    </citation>
    <scope>IDENTIFICATION BY MASS SPECTROMETRY [LARGE SCALE ANALYSIS]</scope>
</reference>
<reference evidence="9" key="8">
    <citation type="journal article" date="2014" name="Science">
        <title>Structure of the large ribosomal subunit from human mitochondria.</title>
        <authorList>
            <person name="Brown A."/>
            <person name="Amunts A."/>
            <person name="Bai X.C."/>
            <person name="Sugimoto Y."/>
            <person name="Edwards P.C."/>
            <person name="Murshudov G."/>
            <person name="Scheres S.H."/>
            <person name="Ramakrishnan V."/>
        </authorList>
    </citation>
    <scope>STRUCTURE BY ELECTRON MICROSCOPY (3.40 ANGSTROMS)</scope>
    <scope>SUBCELLULAR LOCATION</scope>
    <scope>SUBUNIT</scope>
</reference>
<reference evidence="10" key="9">
    <citation type="journal article" date="2015" name="Science">
        <title>Ribosome. The structure of the human mitochondrial ribosome.</title>
        <authorList>
            <person name="Amunts A."/>
            <person name="Brown A."/>
            <person name="Toots J."/>
            <person name="Scheres S.H."/>
            <person name="Ramakrishnan V."/>
        </authorList>
    </citation>
    <scope>STRUCTURE BY ELECTRON MICROSCOPY (3.50 ANGSTROMS)</scope>
    <scope>SUBCELLULAR LOCATION</scope>
    <scope>SUBUNIT</scope>
</reference>
<reference evidence="11 12" key="10">
    <citation type="journal article" date="2017" name="Nat. Struct. Mol. Biol.">
        <title>Structures of the human mitochondrial ribosome in native states of assembly.</title>
        <authorList>
            <person name="Brown A."/>
            <person name="Rathore S."/>
            <person name="Kimanius D."/>
            <person name="Aibara S."/>
            <person name="Bai X.C."/>
            <person name="Rorbach J."/>
            <person name="Amunts A."/>
            <person name="Ramakrishnan V."/>
        </authorList>
    </citation>
    <scope>STRUCTURE BY ELECTRON MICROSCOPY (3.03 ANGSTROMS)</scope>
    <scope>SUBCELLULAR LOCATION</scope>
    <scope>SUBUNIT</scope>
</reference>
<reference evidence="13 14" key="11">
    <citation type="journal article" date="2022" name="Nat. Commun.">
        <title>A late-stage assembly checkpoint of the human mitochondrial ribosome large subunit.</title>
        <authorList>
            <person name="Rebelo-Guiomar P."/>
            <person name="Pellegrino S."/>
            <person name="Dent K.C."/>
            <person name="Sas-Chen A."/>
            <person name="Miller-Fleming L."/>
            <person name="Garone C."/>
            <person name="Van Haute L."/>
            <person name="Rogan J.F."/>
            <person name="Dinan A."/>
            <person name="Firth A.E."/>
            <person name="Andrews B."/>
            <person name="Whitworth A.J."/>
            <person name="Schwartz S."/>
            <person name="Warren A.J."/>
            <person name="Minczuk M."/>
        </authorList>
    </citation>
    <scope>STRUCTURE BY ELECTRON MICROSCOPY (2.9 ANGSTROMS) IN COMPLEX WITH MTLSU</scope>
    <scope>SUBUNIT</scope>
</reference>
<gene>
    <name type="primary">MRPL9</name>
</gene>
<name>RM09_HUMAN</name>